<keyword id="KW-0002">3D-structure</keyword>
<keyword id="KW-0496">Mitochondrion</keyword>
<keyword id="KW-1185">Reference proteome</keyword>
<reference key="1">
    <citation type="journal article" date="2003" name="Nature">
        <title>The genome sequence of the filamentous fungus Neurospora crassa.</title>
        <authorList>
            <person name="Galagan J.E."/>
            <person name="Calvo S.E."/>
            <person name="Borkovich K.A."/>
            <person name="Selker E.U."/>
            <person name="Read N.D."/>
            <person name="Jaffe D.B."/>
            <person name="FitzHugh W."/>
            <person name="Ma L.-J."/>
            <person name="Smirnov S."/>
            <person name="Purcell S."/>
            <person name="Rehman B."/>
            <person name="Elkins T."/>
            <person name="Engels R."/>
            <person name="Wang S."/>
            <person name="Nielsen C.B."/>
            <person name="Butler J."/>
            <person name="Endrizzi M."/>
            <person name="Qui D."/>
            <person name="Ianakiev P."/>
            <person name="Bell-Pedersen D."/>
            <person name="Nelson M.A."/>
            <person name="Werner-Washburne M."/>
            <person name="Selitrennikoff C.P."/>
            <person name="Kinsey J.A."/>
            <person name="Braun E.L."/>
            <person name="Zelter A."/>
            <person name="Schulte U."/>
            <person name="Kothe G.O."/>
            <person name="Jedd G."/>
            <person name="Mewes H.-W."/>
            <person name="Staben C."/>
            <person name="Marcotte E."/>
            <person name="Greenberg D."/>
            <person name="Roy A."/>
            <person name="Foley K."/>
            <person name="Naylor J."/>
            <person name="Stange-Thomann N."/>
            <person name="Barrett R."/>
            <person name="Gnerre S."/>
            <person name="Kamal M."/>
            <person name="Kamvysselis M."/>
            <person name="Mauceli E.W."/>
            <person name="Bielke C."/>
            <person name="Rudd S."/>
            <person name="Frishman D."/>
            <person name="Krystofova S."/>
            <person name="Rasmussen C."/>
            <person name="Metzenberg R.L."/>
            <person name="Perkins D.D."/>
            <person name="Kroken S."/>
            <person name="Cogoni C."/>
            <person name="Macino G."/>
            <person name="Catcheside D.E.A."/>
            <person name="Li W."/>
            <person name="Pratt R.J."/>
            <person name="Osmani S.A."/>
            <person name="DeSouza C.P.C."/>
            <person name="Glass N.L."/>
            <person name="Orbach M.J."/>
            <person name="Berglund J.A."/>
            <person name="Voelker R."/>
            <person name="Yarden O."/>
            <person name="Plamann M."/>
            <person name="Seiler S."/>
            <person name="Dunlap J.C."/>
            <person name="Radford A."/>
            <person name="Aramayo R."/>
            <person name="Natvig D.O."/>
            <person name="Alex L.A."/>
            <person name="Mannhaupt G."/>
            <person name="Ebbole D.J."/>
            <person name="Freitag M."/>
            <person name="Paulsen I."/>
            <person name="Sachs M.S."/>
            <person name="Lander E.S."/>
            <person name="Nusbaum C."/>
            <person name="Birren B.W."/>
        </authorList>
    </citation>
    <scope>NUCLEOTIDE SEQUENCE [LARGE SCALE GENOMIC DNA]</scope>
    <source>
        <strain>ATCC 24698 / 74-OR23-1A / CBS 708.71 / DSM 1257 / FGSC 987</strain>
    </source>
</reference>
<reference evidence="5 6" key="2">
    <citation type="journal article" date="2020" name="Nat. Commun.">
        <title>Analysis of translating mitoribosome reveals functional characteristics of translation in mitochondria of fungi.</title>
        <authorList>
            <person name="Itoh Y."/>
            <person name="Naschberger A."/>
            <person name="Mortezaei N."/>
            <person name="Herrmann J.M."/>
            <person name="Amunts A."/>
        </authorList>
    </citation>
    <scope>STRUCTURE BY ELECTRON MICROSCOPY (2.85 ANGSTROMS)</scope>
</reference>
<accession>Q1K6Q3</accession>
<organism>
    <name type="scientific">Neurospora crassa (strain ATCC 24698 / 74-OR23-1A / CBS 708.71 / DSM 1257 / FGSC 987)</name>
    <dbReference type="NCBI Taxonomy" id="367110"/>
    <lineage>
        <taxon>Eukaryota</taxon>
        <taxon>Fungi</taxon>
        <taxon>Dikarya</taxon>
        <taxon>Ascomycota</taxon>
        <taxon>Pezizomycotina</taxon>
        <taxon>Sordariomycetes</taxon>
        <taxon>Sordariomycetidae</taxon>
        <taxon>Sordariales</taxon>
        <taxon>Sordariaceae</taxon>
        <taxon>Neurospora</taxon>
    </lineage>
</organism>
<sequence>MKSSLRIQSTLGLLFRPCAVSAPATAPGLNAHARWAHKTAAQLPLIPKPTPFVPDVPTFLTLIGRDLKQHADKFPTWEALFTLTTDQLRELGVEPPRARRYLLRWRQRFREGKFGIGGDLKHVENGVAYLKIHEKEASPTRTSRRVVNVPANQHVEEVSEGERVKVKGYKVKGVSTIVGPYALPVQKGVAKLAVTEGMWEDKRGHKVDGGERRRAEVRFKRGVAERKALREKMGFY</sequence>
<protein>
    <recommendedName>
        <fullName evidence="2">Small ribosomal subunit protein mS41</fullName>
    </recommendedName>
</protein>
<comment type="function">
    <text evidence="4">Component of the mitochondrial ribosome (mitoribosome), a dedicated translation machinery responsible for the synthesis of mitochondrial genome-encoded proteins, including at least some of the essential transmembrane subunits of the mitochondrial respiratory chain. The mitoribosomes are attached to the mitochondrial inner membrane and translation products are cotranslationally integrated into the membrane.</text>
</comment>
<comment type="subunit">
    <text evidence="1">Component of the mitochondrial small ribosomal subunit (mt-SSU). Mature N.crassa 74S mitochondrial ribosomes consist of a small (37S) and a large (54S) subunit. The 37S small subunit contains a 16S ribosomal RNA (16S mt-rRNA) and 32 different proteins. The 54S large subunit contains a 23S rRNA (23S mt-rRNA) and 42 different proteins.</text>
</comment>
<comment type="subcellular location">
    <subcellularLocation>
        <location evidence="1">Mitochondrion</location>
    </subcellularLocation>
</comment>
<comment type="similarity">
    <text evidence="3">Belongs to the mitochondrion-specific ribosomal protein mS41 family.</text>
</comment>
<feature type="chain" id="PRO_0000458584" description="Small ribosomal subunit protein mS41">
    <location>
        <begin position="1"/>
        <end position="236"/>
    </location>
</feature>
<gene>
    <name type="primary">fyv4</name>
    <name type="ORF">NCU03653</name>
</gene>
<dbReference type="EMBL" id="CM002240">
    <property type="protein sequence ID" value="EAA31497.2"/>
    <property type="molecule type" value="Genomic_DNA"/>
</dbReference>
<dbReference type="RefSeq" id="XP_960733.2">
    <property type="nucleotide sequence ID" value="XM_955640.3"/>
</dbReference>
<dbReference type="PDB" id="6YW5">
    <property type="method" value="EM"/>
    <property type="resolution" value="2.85 A"/>
    <property type="chains" value="33=1-236"/>
</dbReference>
<dbReference type="PDB" id="6YWX">
    <property type="method" value="EM"/>
    <property type="resolution" value="3.10 A"/>
    <property type="chains" value="33=1-236"/>
</dbReference>
<dbReference type="PDBsum" id="6YW5"/>
<dbReference type="PDBsum" id="6YWX"/>
<dbReference type="EMDB" id="EMD-10958"/>
<dbReference type="EMDB" id="EMD-10978"/>
<dbReference type="SMR" id="Q1K6Q3"/>
<dbReference type="STRING" id="367110.Q1K6Q3"/>
<dbReference type="PaxDb" id="5141-EFNCRP00000003394"/>
<dbReference type="EnsemblFungi" id="EAA31497">
    <property type="protein sequence ID" value="EAA31497"/>
    <property type="gene ID" value="NCU03653"/>
</dbReference>
<dbReference type="GeneID" id="3876884"/>
<dbReference type="KEGG" id="ncr:NCU03653"/>
<dbReference type="VEuPathDB" id="FungiDB:NCU03653"/>
<dbReference type="HOGENOM" id="CLU_087049_0_0_1"/>
<dbReference type="InParanoid" id="Q1K6Q3"/>
<dbReference type="OMA" id="GMWEDRR"/>
<dbReference type="OrthoDB" id="18595at2759"/>
<dbReference type="Proteomes" id="UP000001805">
    <property type="component" value="Chromosome 2, Linkage Group V"/>
</dbReference>
<dbReference type="GO" id="GO:0005739">
    <property type="term" value="C:mitochondrion"/>
    <property type="evidence" value="ECO:0000318"/>
    <property type="project" value="GO_Central"/>
</dbReference>
<dbReference type="CDD" id="cd09487">
    <property type="entry name" value="SAM_superfamily"/>
    <property type="match status" value="1"/>
</dbReference>
<dbReference type="InterPro" id="IPR039603">
    <property type="entry name" value="Ribosomal_mS41"/>
</dbReference>
<dbReference type="InterPro" id="IPR013761">
    <property type="entry name" value="SAM/pointed_sf"/>
</dbReference>
<dbReference type="InterPro" id="IPR019083">
    <property type="entry name" value="SAM_Ribosomal_mS41"/>
</dbReference>
<dbReference type="PANTHER" id="PTHR28235">
    <property type="entry name" value="PROTEIN FYV4, MITOCHONDRIAL"/>
    <property type="match status" value="1"/>
</dbReference>
<dbReference type="PANTHER" id="PTHR28235:SF1">
    <property type="entry name" value="SMALL RIBOSOMAL SUBUNIT PROTEIN MS41"/>
    <property type="match status" value="1"/>
</dbReference>
<dbReference type="Pfam" id="PF09597">
    <property type="entry name" value="SAM_Ribosomal_mS41"/>
    <property type="match status" value="1"/>
</dbReference>
<dbReference type="SMART" id="SM01238">
    <property type="entry name" value="IGR"/>
    <property type="match status" value="1"/>
</dbReference>
<dbReference type="SUPFAM" id="SSF47769">
    <property type="entry name" value="SAM/Pointed domain"/>
    <property type="match status" value="1"/>
</dbReference>
<name>FYV4_NEUCR</name>
<proteinExistence type="evidence at protein level"/>
<evidence type="ECO:0000269" key="1">
    <source>
    </source>
</evidence>
<evidence type="ECO:0000303" key="2">
    <source>
    </source>
</evidence>
<evidence type="ECO:0000305" key="3"/>
<evidence type="ECO:0000305" key="4">
    <source>
    </source>
</evidence>
<evidence type="ECO:0007744" key="5">
    <source>
        <dbReference type="PDB" id="6YW5"/>
    </source>
</evidence>
<evidence type="ECO:0007744" key="6">
    <source>
        <dbReference type="PDB" id="6YWX"/>
    </source>
</evidence>